<evidence type="ECO:0000250" key="1"/>
<evidence type="ECO:0000250" key="2">
    <source>
        <dbReference type="UniProtKB" id="P0A0C2"/>
    </source>
</evidence>
<evidence type="ECO:0000255" key="3">
    <source>
        <dbReference type="PROSITE-ProRule" id="PRU00532"/>
    </source>
</evidence>
<evidence type="ECO:0000305" key="4"/>
<name>AACA_ENTFC</name>
<proteinExistence type="inferred from homology"/>
<keyword id="KW-0012">Acyltransferase</keyword>
<keyword id="KW-0046">Antibiotic resistance</keyword>
<keyword id="KW-0067">ATP-binding</keyword>
<keyword id="KW-0963">Cytoplasm</keyword>
<keyword id="KW-0418">Kinase</keyword>
<keyword id="KW-0511">Multifunctional enzyme</keyword>
<keyword id="KW-0547">Nucleotide-binding</keyword>
<keyword id="KW-0808">Transferase</keyword>
<keyword id="KW-0814">Transposable element</keyword>
<comment type="function">
    <text evidence="2">Involved in resistance to gentamicin, tobramycin, and kanamycin. Tobramycin and kanamycin resistance is due to the ACC activity, specified by N-terminal region. The C-terminal region is a kinase that phosphorylates several 4,6-disubstituted aminoglycosides.</text>
</comment>
<comment type="catalytic activity">
    <reaction evidence="2">
        <text>a gentamycin + GTP = a gentamycin 2''-phosphate + GDP + H(+)</text>
        <dbReference type="Rhea" id="RHEA:48872"/>
        <dbReference type="ChEBI" id="CHEBI:15378"/>
        <dbReference type="ChEBI" id="CHEBI:37565"/>
        <dbReference type="ChEBI" id="CHEBI:58189"/>
        <dbReference type="ChEBI" id="CHEBI:90218"/>
        <dbReference type="ChEBI" id="CHEBI:90219"/>
        <dbReference type="EC" id="2.7.1.190"/>
    </reaction>
</comment>
<comment type="subcellular location">
    <subcellularLocation>
        <location evidence="1">Cytoplasm</location>
    </subcellularLocation>
</comment>
<comment type="similarity">
    <text evidence="4">In the C-terminal section; belongs to the aminoglycoside phosphotransferase family.</text>
</comment>
<reference key="1">
    <citation type="submission" date="2005-03" db="EMBL/GenBank/DDBJ databases">
        <title>The study of high-level gentamicin resistance mediated by transposon in Enterococcus faecium.</title>
        <authorList>
            <person name="Shen H."/>
            <person name="Xu S."/>
        </authorList>
    </citation>
    <scope>NUCLEOTIDE SEQUENCE [GENOMIC DNA]</scope>
    <source>
        <transposon>IS256</transposon>
    </source>
</reference>
<gene>
    <name type="primary">aacA-aphD</name>
</gene>
<sequence length="479" mass="56855">MNIVENEICIRTLIDDDFPLMLKWLTDERVLEFYGGRDKKYTLESLKKHYTEPWEDEVFRVIIEYNNVPIGYGQIYKMYDELYTDYHYPKTDEIVYGMDQFIGEPNYWSKGIGTRYIKLIFEFLKKERNANAVILDPHKNNPRAIRAYQKSGFRIIEDLPEHELHEGKKEDCYLMEYRYDDNATNVKAMKYLIEHYFDNFKVDSIEIIGSGYDSVAYLVNNEYIFKTKFSTNKKKGYAKEKAIYNFLNTNLETNVKIPNIEYSYISDELSILGYKEIKGTFLTPEIYSTMSEEEQNLLKRDIASFLRQMHGLDYTDISECTIDNKQNVLEEYILLRETIYNDLTDIEKDYIESFMERLNATTVFEGKKCLCHNDFSCNHLLLDGNNRLTGIIDFGDSGIIDEYCDFIYLLEDSEEEIGTNFGEDILRMYGNIDIEKAKEYQDIVEEYYPIETIVYGIKNIKQEFIENGRKEIYKRTYKD</sequence>
<accession>Q52S23</accession>
<dbReference type="EC" id="2.3.1.-"/>
<dbReference type="EC" id="2.7.1.190" evidence="2"/>
<dbReference type="EMBL" id="AY971367">
    <property type="protein sequence ID" value="AAY16108.1"/>
    <property type="molecule type" value="Genomic_DNA"/>
</dbReference>
<dbReference type="RefSeq" id="YP_002274416.1">
    <property type="nucleotide sequence ID" value="NC_011364.1"/>
</dbReference>
<dbReference type="SMR" id="Q52S23"/>
<dbReference type="STRING" id="1352.AL014_01170"/>
<dbReference type="eggNOG" id="COG1670">
    <property type="taxonomic scope" value="Bacteria"/>
</dbReference>
<dbReference type="eggNOG" id="COG3173">
    <property type="taxonomic scope" value="Bacteria"/>
</dbReference>
<dbReference type="PRO" id="PR:Q52S23"/>
<dbReference type="GO" id="GO:0005737">
    <property type="term" value="C:cytoplasm"/>
    <property type="evidence" value="ECO:0007669"/>
    <property type="project" value="UniProtKB-SubCell"/>
</dbReference>
<dbReference type="GO" id="GO:0034071">
    <property type="term" value="F:aminoglycoside phosphotransferase activity"/>
    <property type="evidence" value="ECO:0007669"/>
    <property type="project" value="UniProtKB-EC"/>
</dbReference>
<dbReference type="GO" id="GO:0005524">
    <property type="term" value="F:ATP binding"/>
    <property type="evidence" value="ECO:0007669"/>
    <property type="project" value="UniProtKB-KW"/>
</dbReference>
<dbReference type="GO" id="GO:0016410">
    <property type="term" value="F:N-acyltransferase activity"/>
    <property type="evidence" value="ECO:0007669"/>
    <property type="project" value="TreeGrafter"/>
</dbReference>
<dbReference type="GO" id="GO:0046677">
    <property type="term" value="P:response to antibiotic"/>
    <property type="evidence" value="ECO:0007669"/>
    <property type="project" value="UniProtKB-KW"/>
</dbReference>
<dbReference type="CDD" id="cd05120">
    <property type="entry name" value="APH_ChoK_like"/>
    <property type="match status" value="1"/>
</dbReference>
<dbReference type="Gene3D" id="3.40.630.30">
    <property type="match status" value="1"/>
</dbReference>
<dbReference type="Gene3D" id="3.90.1200.10">
    <property type="match status" value="1"/>
</dbReference>
<dbReference type="Gene3D" id="3.30.200.20">
    <property type="entry name" value="Phosphorylase Kinase, domain 1"/>
    <property type="match status" value="1"/>
</dbReference>
<dbReference type="InterPro" id="IPR016181">
    <property type="entry name" value="Acyl_CoA_acyltransferase"/>
</dbReference>
<dbReference type="InterPro" id="IPR002575">
    <property type="entry name" value="Aminoglycoside_PTrfase"/>
</dbReference>
<dbReference type="InterPro" id="IPR000182">
    <property type="entry name" value="GNAT_dom"/>
</dbReference>
<dbReference type="InterPro" id="IPR011009">
    <property type="entry name" value="Kinase-like_dom_sf"/>
</dbReference>
<dbReference type="NCBIfam" id="NF000507">
    <property type="entry name" value="AAC_6p_Ie"/>
    <property type="match status" value="1"/>
</dbReference>
<dbReference type="NCBIfam" id="NF033693">
    <property type="entry name" value="AAC_6p_Ie_fam"/>
    <property type="match status" value="1"/>
</dbReference>
<dbReference type="NCBIfam" id="NF033692">
    <property type="entry name" value="APH_2pp_I_a_f_h"/>
    <property type="match status" value="1"/>
</dbReference>
<dbReference type="NCBIfam" id="NF000508">
    <property type="entry name" value="APH_2pp_Ia"/>
    <property type="match status" value="1"/>
</dbReference>
<dbReference type="PANTHER" id="PTHR31438">
    <property type="entry name" value="LYSINE N-ACYLTRANSFERASE C17G9.06C-RELATED"/>
    <property type="match status" value="1"/>
</dbReference>
<dbReference type="PANTHER" id="PTHR31438:SF1">
    <property type="entry name" value="LYSINE N-ACYLTRANSFERASE C17G9.06C-RELATED"/>
    <property type="match status" value="1"/>
</dbReference>
<dbReference type="Pfam" id="PF13523">
    <property type="entry name" value="Acetyltransf_8"/>
    <property type="match status" value="1"/>
</dbReference>
<dbReference type="Pfam" id="PF01636">
    <property type="entry name" value="APH"/>
    <property type="match status" value="1"/>
</dbReference>
<dbReference type="SUPFAM" id="SSF55729">
    <property type="entry name" value="Acyl-CoA N-acyltransferases (Nat)"/>
    <property type="match status" value="1"/>
</dbReference>
<dbReference type="SUPFAM" id="SSF56112">
    <property type="entry name" value="Protein kinase-like (PK-like)"/>
    <property type="match status" value="1"/>
</dbReference>
<dbReference type="PROSITE" id="PS51186">
    <property type="entry name" value="GNAT"/>
    <property type="match status" value="1"/>
</dbReference>
<protein>
    <recommendedName>
        <fullName>Bifunctional AAC/APH</fullName>
    </recommendedName>
    <domain>
        <recommendedName>
            <fullName>6'-aminoglycoside N-acetyltransferase</fullName>
            <ecNumber>2.3.1.-</ecNumber>
        </recommendedName>
        <alternativeName>
            <fullName>AAC(6')</fullName>
        </alternativeName>
    </domain>
    <domain>
        <recommendedName>
            <fullName>Aminoglycoside 2''-phosphotransferase</fullName>
        </recommendedName>
        <alternativeName>
            <fullName>2''-aminoglycoside phosphotransferase</fullName>
            <ecNumber evidence="2">2.7.1.190</ecNumber>
        </alternativeName>
        <alternativeName>
            <fullName>APH(2'')</fullName>
        </alternativeName>
    </domain>
</protein>
<organism>
    <name type="scientific">Enterococcus faecium</name>
    <name type="common">Streptococcus faecium</name>
    <dbReference type="NCBI Taxonomy" id="1352"/>
    <lineage>
        <taxon>Bacteria</taxon>
        <taxon>Bacillati</taxon>
        <taxon>Bacillota</taxon>
        <taxon>Bacilli</taxon>
        <taxon>Lactobacillales</taxon>
        <taxon>Enterococcaceae</taxon>
        <taxon>Enterococcus</taxon>
    </lineage>
</organism>
<feature type="chain" id="PRO_0000223381" description="Bifunctional AAC/APH">
    <location>
        <begin position="1"/>
        <end position="479"/>
    </location>
</feature>
<feature type="domain" description="N-acetyltransferase" evidence="3">
    <location>
        <begin position="8"/>
        <end position="180"/>
    </location>
</feature>
<feature type="region of interest" description="Acetyl-CoA binding site" evidence="1">
    <location>
        <begin position="110"/>
        <end position="153"/>
    </location>
</feature>
<feature type="active site" description="Proton acceptor; for phosphotransferase activity" evidence="1">
    <location>
        <position position="374"/>
    </location>
</feature>
<feature type="binding site" evidence="1">
    <location>
        <position position="393"/>
    </location>
    <ligand>
        <name>a gentamycin</name>
        <dbReference type="ChEBI" id="CHEBI:90218"/>
    </ligand>
</feature>